<protein>
    <recommendedName>
        <fullName>Adhesion G protein-coupled receptor E2</fullName>
    </recommendedName>
    <alternativeName>
        <fullName>EGF-like module receptor 1</fullName>
    </alternativeName>
    <alternativeName>
        <fullName>EGF-like module-containing mucin-like hormone receptor-like 1</fullName>
    </alternativeName>
    <alternativeName>
        <fullName>EMR1 hormone receptor</fullName>
    </alternativeName>
</protein>
<proteinExistence type="evidence at transcript level"/>
<reference key="1">
    <citation type="journal article" date="2004" name="Immunogenetics">
        <title>The EGF-TM7 family of the rat.</title>
        <authorList>
            <person name="Hamann J."/>
        </authorList>
    </citation>
    <scope>NUCLEOTIDE SEQUENCE [MRNA]</scope>
    <source>
        <strain>Brown Norway</strain>
    </source>
</reference>
<sequence>MWGFWLLLFWGFSGTHRWGMTTLAILGQRLNGVNECQDTTTCPAYATCTDTTESYYCTCKQGFLPSNGQTNFQGPGVECQDVNECLRSDSPCGSNSVCTNIPGRARCSCLSGFSSSAGGSWILGSPGHFLCTDVDECLTIGICPKNSNCSNSVGSYSCTCQSGFVSNGSTCEDEDECVTRNACPEHATCHNTLGSYYCTCNEGLEFSGGGPMFQGLEESCEDVDECSRNSTLCGPSFICINTLGSYSCSCPAGFSLSTFQIPGHPADGNCTDIDECDDICPSNSSCTNTLGSYFCTCHPGFASSNGQLNFTDQEVTCEDIDECTQDPFRCGRNSSCTNVPGSYNCSCLPDFRMDPGGSQAHGNFTCKRIPFKCKEDLIPKSEQIEQCQAGQGRNLDYTSFCTFVNATFTILDNTCENKSAPVSLQSAATSVSLMLEQASTWFEFSREETSTLGTILLETVESTMLAALLTPSGNASQTIRTEYLEIESKVINEECNEENVSINLKARGDKMDVGCFIIKESESTGTPGVAFVSFAHMDSVLDERFFEDGQASWKLRMNSHVVGGTVTGERKEDFSKPIVYTLQHIQPKQKSERSICVSWNTDVEDGRWTPSGCETVEASETHTVCSCNRMTNLAIIMASGELTMEFSLYIISYVGTVISLVCLALAIATFLLFRAVQNHNTYLHLHLCVCLFLAKILFLTGIDKTDNQTACAIIAGFLHYLFLACFFWMLVEAVMLFLMVRNLKVVNYFSSRNIKMLHLCAFGYGLPVVVVIISATVHPWGYGMHNRCWLNTETGFIWSFLGPVCMIITINSALLAWTLWVLRQKLCSVNSEVSKLKDTRLLTFKAIAQIFILGCSWVLGIFQIGPLASIMAYLFTTINSLQGAFIFLIHCLLNRQVRDEYRKLLTRKTDLSSHSQTSGILLSSMPSTSKTG</sequence>
<accession>Q5Y4N8</accession>
<name>AGRE1_RAT</name>
<gene>
    <name type="primary">Adgre1</name>
    <name type="synonym">Emr1</name>
</gene>
<feature type="signal peptide" evidence="3">
    <location>
        <begin position="1"/>
        <end position="15"/>
    </location>
</feature>
<feature type="chain" id="PRO_0000250959" description="Adhesion G protein-coupled receptor E2">
    <location>
        <begin position="16"/>
        <end position="932"/>
    </location>
</feature>
<feature type="topological domain" description="Extracellular" evidence="6">
    <location>
        <begin position="16"/>
        <end position="652"/>
    </location>
</feature>
<feature type="transmembrane region" description="Helical; Name=1" evidence="3">
    <location>
        <begin position="653"/>
        <end position="673"/>
    </location>
</feature>
<feature type="topological domain" description="Cytoplasmic" evidence="6">
    <location>
        <begin position="674"/>
        <end position="681"/>
    </location>
</feature>
<feature type="transmembrane region" description="Helical; Name=2" evidence="3">
    <location>
        <begin position="682"/>
        <end position="702"/>
    </location>
</feature>
<feature type="topological domain" description="Extracellular" evidence="6">
    <location>
        <begin position="703"/>
        <end position="719"/>
    </location>
</feature>
<feature type="transmembrane region" description="Helical; Name=3" evidence="3">
    <location>
        <begin position="720"/>
        <end position="740"/>
    </location>
</feature>
<feature type="topological domain" description="Cytoplasmic" evidence="6">
    <location>
        <begin position="741"/>
        <end position="756"/>
    </location>
</feature>
<feature type="transmembrane region" description="Helical; Name=4" evidence="3">
    <location>
        <begin position="757"/>
        <end position="777"/>
    </location>
</feature>
<feature type="topological domain" description="Extracellular" evidence="6">
    <location>
        <begin position="778"/>
        <end position="795"/>
    </location>
</feature>
<feature type="transmembrane region" description="Helical; Name=5" evidence="3">
    <location>
        <begin position="796"/>
        <end position="816"/>
    </location>
</feature>
<feature type="topological domain" description="Cytoplasmic" evidence="6">
    <location>
        <begin position="817"/>
        <end position="849"/>
    </location>
</feature>
<feature type="transmembrane region" description="Helical; Name=6" evidence="3">
    <location>
        <begin position="850"/>
        <end position="870"/>
    </location>
</feature>
<feature type="topological domain" description="Extracellular" evidence="6">
    <location>
        <begin position="871"/>
        <end position="872"/>
    </location>
</feature>
<feature type="transmembrane region" description="Helical; Name=7" evidence="3">
    <location>
        <begin position="873"/>
        <end position="893"/>
    </location>
</feature>
<feature type="topological domain" description="Cytoplasmic" evidence="6">
    <location>
        <begin position="894"/>
        <end position="932"/>
    </location>
</feature>
<feature type="domain" description="EGF-like 1" evidence="4">
    <location>
        <begin position="32"/>
        <end position="69"/>
    </location>
</feature>
<feature type="domain" description="EGF-like 2" evidence="4">
    <location>
        <begin position="81"/>
        <end position="119"/>
    </location>
</feature>
<feature type="domain" description="EGF-like 3; calcium-binding" evidence="4">
    <location>
        <begin position="133"/>
        <end position="172"/>
    </location>
</feature>
<feature type="domain" description="EGF-like 4; calcium-binding" evidence="4">
    <location>
        <begin position="173"/>
        <end position="210"/>
    </location>
</feature>
<feature type="domain" description="EGF-like 5; calcium-binding" evidence="4">
    <location>
        <begin position="222"/>
        <end position="260"/>
    </location>
</feature>
<feature type="domain" description="EGF-like 6; calcium-binding" evidence="4">
    <location>
        <begin position="272"/>
        <end position="307"/>
    </location>
</feature>
<feature type="domain" description="EGF-like 7; calcium-binding" evidence="4">
    <location>
        <begin position="319"/>
        <end position="354"/>
    </location>
</feature>
<feature type="domain" description="GAIN-B" evidence="5">
    <location>
        <begin position="482"/>
        <end position="643"/>
    </location>
</feature>
<feature type="region of interest" description="GPS" evidence="5">
    <location>
        <begin position="596"/>
        <end position="643"/>
    </location>
</feature>
<feature type="short sequence motif" description="Cell attachment site" evidence="3">
    <location>
        <begin position="507"/>
        <end position="509"/>
    </location>
</feature>
<feature type="glycosylation site" description="N-linked (GlcNAc...) asparagine" evidence="3">
    <location>
        <position position="148"/>
    </location>
</feature>
<feature type="glycosylation site" description="N-linked (GlcNAc...) asparagine" evidence="3">
    <location>
        <position position="167"/>
    </location>
</feature>
<feature type="glycosylation site" description="N-linked (GlcNAc...) asparagine" evidence="3">
    <location>
        <position position="229"/>
    </location>
</feature>
<feature type="glycosylation site" description="N-linked (GlcNAc...) asparagine" evidence="3">
    <location>
        <position position="269"/>
    </location>
</feature>
<feature type="glycosylation site" description="N-linked (GlcNAc...) asparagine" evidence="3">
    <location>
        <position position="283"/>
    </location>
</feature>
<feature type="glycosylation site" description="N-linked (GlcNAc...) asparagine" evidence="3">
    <location>
        <position position="309"/>
    </location>
</feature>
<feature type="glycosylation site" description="N-linked (GlcNAc...) asparagine" evidence="3">
    <location>
        <position position="333"/>
    </location>
</feature>
<feature type="glycosylation site" description="N-linked (GlcNAc...) asparagine" evidence="3">
    <location>
        <position position="344"/>
    </location>
</feature>
<feature type="glycosylation site" description="N-linked (GlcNAc...) asparagine" evidence="3">
    <location>
        <position position="363"/>
    </location>
</feature>
<feature type="glycosylation site" description="N-linked (GlcNAc...) asparagine" evidence="3">
    <location>
        <position position="405"/>
    </location>
</feature>
<feature type="glycosylation site" description="N-linked (GlcNAc...) asparagine" evidence="3">
    <location>
        <position position="417"/>
    </location>
</feature>
<feature type="glycosylation site" description="N-linked (GlcNAc...) asparagine" evidence="3">
    <location>
        <position position="474"/>
    </location>
</feature>
<feature type="glycosylation site" description="N-linked (GlcNAc...) asparagine" evidence="3">
    <location>
        <position position="499"/>
    </location>
</feature>
<feature type="glycosylation site" description="N-linked (GlcNAc...) asparagine" evidence="3">
    <location>
        <position position="707"/>
    </location>
</feature>
<feature type="disulfide bond" evidence="4">
    <location>
        <begin position="36"/>
        <end position="48"/>
    </location>
</feature>
<feature type="disulfide bond" evidence="4">
    <location>
        <begin position="42"/>
        <end position="57"/>
    </location>
</feature>
<feature type="disulfide bond" evidence="4">
    <location>
        <begin position="85"/>
        <end position="98"/>
    </location>
</feature>
<feature type="disulfide bond" evidence="4">
    <location>
        <begin position="92"/>
        <end position="107"/>
    </location>
</feature>
<feature type="disulfide bond" evidence="4">
    <location>
        <begin position="137"/>
        <end position="149"/>
    </location>
</feature>
<feature type="disulfide bond" evidence="4">
    <location>
        <begin position="143"/>
        <end position="158"/>
    </location>
</feature>
<feature type="disulfide bond" evidence="4">
    <location>
        <begin position="160"/>
        <end position="171"/>
    </location>
</feature>
<feature type="disulfide bond" evidence="4">
    <location>
        <begin position="177"/>
        <end position="189"/>
    </location>
</feature>
<feature type="disulfide bond" evidence="4">
    <location>
        <begin position="183"/>
        <end position="198"/>
    </location>
</feature>
<feature type="disulfide bond" evidence="4">
    <location>
        <begin position="226"/>
        <end position="239"/>
    </location>
</feature>
<feature type="disulfide bond" evidence="4">
    <location>
        <begin position="233"/>
        <end position="248"/>
    </location>
</feature>
<feature type="disulfide bond" evidence="4">
    <location>
        <begin position="276"/>
        <end position="286"/>
    </location>
</feature>
<feature type="disulfide bond" evidence="4">
    <location>
        <begin position="280"/>
        <end position="295"/>
    </location>
</feature>
<feature type="disulfide bond" evidence="4">
    <location>
        <begin position="323"/>
        <end position="336"/>
    </location>
</feature>
<feature type="disulfide bond" evidence="4">
    <location>
        <begin position="330"/>
        <end position="345"/>
    </location>
</feature>
<feature type="disulfide bond" evidence="5">
    <location>
        <begin position="596"/>
        <end position="625"/>
    </location>
</feature>
<feature type="disulfide bond" evidence="5">
    <location>
        <begin position="613"/>
        <end position="627"/>
    </location>
</feature>
<dbReference type="EMBL" id="AY686632">
    <property type="protein sequence ID" value="AAU95564.1"/>
    <property type="molecule type" value="mRNA"/>
</dbReference>
<dbReference type="RefSeq" id="NP_001007558.1">
    <property type="nucleotide sequence ID" value="NM_001007557.2"/>
</dbReference>
<dbReference type="SMR" id="Q5Y4N8"/>
<dbReference type="FunCoup" id="Q5Y4N8">
    <property type="interactions" value="19"/>
</dbReference>
<dbReference type="STRING" id="10116.ENSRNOP00000067220"/>
<dbReference type="GlyCosmos" id="Q5Y4N8">
    <property type="glycosylation" value="14 sites, No reported glycans"/>
</dbReference>
<dbReference type="GlyGen" id="Q5Y4N8">
    <property type="glycosylation" value="14 sites"/>
</dbReference>
<dbReference type="iPTMnet" id="Q5Y4N8"/>
<dbReference type="PhosphoSitePlus" id="Q5Y4N8"/>
<dbReference type="PaxDb" id="10116-ENSRNOP00000067220"/>
<dbReference type="Ensembl" id="ENSRNOT00000073926.3">
    <property type="protein sequence ID" value="ENSRNOP00000067220.1"/>
    <property type="gene ID" value="ENSRNOG00000046254.3"/>
</dbReference>
<dbReference type="GeneID" id="316137"/>
<dbReference type="KEGG" id="rno:316137"/>
<dbReference type="AGR" id="RGD:1359214"/>
<dbReference type="CTD" id="2015"/>
<dbReference type="RGD" id="1359214">
    <property type="gene designation" value="Adgre1"/>
</dbReference>
<dbReference type="eggNOG" id="KOG4193">
    <property type="taxonomic scope" value="Eukaryota"/>
</dbReference>
<dbReference type="GeneTree" id="ENSGT00940000161354"/>
<dbReference type="HOGENOM" id="CLU_002753_3_7_1"/>
<dbReference type="InParanoid" id="Q5Y4N8"/>
<dbReference type="OrthoDB" id="64389at9989"/>
<dbReference type="PhylomeDB" id="Q5Y4N8"/>
<dbReference type="Reactome" id="R-RNO-373080">
    <property type="pathway name" value="Class B/2 (Secretin family receptors)"/>
</dbReference>
<dbReference type="PRO" id="PR:Q5Y4N8"/>
<dbReference type="Proteomes" id="UP000002494">
    <property type="component" value="Chromosome 9"/>
</dbReference>
<dbReference type="Bgee" id="ENSRNOG00000046254">
    <property type="expression patterns" value="Expressed in spleen and 19 other cell types or tissues"/>
</dbReference>
<dbReference type="GO" id="GO:0071944">
    <property type="term" value="C:cell periphery"/>
    <property type="evidence" value="ECO:0000266"/>
    <property type="project" value="RGD"/>
</dbReference>
<dbReference type="GO" id="GO:0009897">
    <property type="term" value="C:external side of plasma membrane"/>
    <property type="evidence" value="ECO:0000266"/>
    <property type="project" value="RGD"/>
</dbReference>
<dbReference type="GO" id="GO:0005886">
    <property type="term" value="C:plasma membrane"/>
    <property type="evidence" value="ECO:0000266"/>
    <property type="project" value="RGD"/>
</dbReference>
<dbReference type="GO" id="GO:0005509">
    <property type="term" value="F:calcium ion binding"/>
    <property type="evidence" value="ECO:0007669"/>
    <property type="project" value="InterPro"/>
</dbReference>
<dbReference type="GO" id="GO:0004930">
    <property type="term" value="F:G protein-coupled receptor activity"/>
    <property type="evidence" value="ECO:0000318"/>
    <property type="project" value="GO_Central"/>
</dbReference>
<dbReference type="GO" id="GO:0002250">
    <property type="term" value="P:adaptive immune response"/>
    <property type="evidence" value="ECO:0007669"/>
    <property type="project" value="UniProtKB-KW"/>
</dbReference>
<dbReference type="GO" id="GO:0007189">
    <property type="term" value="P:adenylate cyclase-activating G protein-coupled receptor signaling pathway"/>
    <property type="evidence" value="ECO:0000318"/>
    <property type="project" value="GO_Central"/>
</dbReference>
<dbReference type="GO" id="GO:0007166">
    <property type="term" value="P:cell surface receptor signaling pathway"/>
    <property type="evidence" value="ECO:0007669"/>
    <property type="project" value="InterPro"/>
</dbReference>
<dbReference type="GO" id="GO:0071560">
    <property type="term" value="P:cellular response to transforming growth factor beta stimulus"/>
    <property type="evidence" value="ECO:0000270"/>
    <property type="project" value="RGD"/>
</dbReference>
<dbReference type="GO" id="GO:0071356">
    <property type="term" value="P:cellular response to tumor necrosis factor"/>
    <property type="evidence" value="ECO:0000270"/>
    <property type="project" value="RGD"/>
</dbReference>
<dbReference type="CDD" id="cd15439">
    <property type="entry name" value="7tmB2_EMR"/>
    <property type="match status" value="1"/>
</dbReference>
<dbReference type="CDD" id="cd00054">
    <property type="entry name" value="EGF_CA"/>
    <property type="match status" value="7"/>
</dbReference>
<dbReference type="FunFam" id="2.10.25.10:FF:000243">
    <property type="entry name" value="Adhesion G protein-coupled receptor E1"/>
    <property type="match status" value="1"/>
</dbReference>
<dbReference type="FunFam" id="2.10.25.10:FF:000464">
    <property type="entry name" value="Adhesion G protein-coupled receptor E1"/>
    <property type="match status" value="1"/>
</dbReference>
<dbReference type="FunFam" id="2.10.25.10:FF:000506">
    <property type="entry name" value="Adhesion G protein-coupled receptor E1"/>
    <property type="match status" value="1"/>
</dbReference>
<dbReference type="FunFam" id="2.60.220.50:FF:000013">
    <property type="entry name" value="Adhesion G protein-coupled receptor E1"/>
    <property type="match status" value="1"/>
</dbReference>
<dbReference type="FunFam" id="1.20.1070.10:FF:000054">
    <property type="entry name" value="Adhesion G protein-coupled receptor E3"/>
    <property type="match status" value="1"/>
</dbReference>
<dbReference type="FunFam" id="2.10.25.10:FF:000005">
    <property type="entry name" value="Fibrillin 2"/>
    <property type="match status" value="1"/>
</dbReference>
<dbReference type="FunFam" id="2.10.25.10:FF:000038">
    <property type="entry name" value="Fibrillin 2"/>
    <property type="match status" value="2"/>
</dbReference>
<dbReference type="Gene3D" id="2.60.220.50">
    <property type="match status" value="1"/>
</dbReference>
<dbReference type="Gene3D" id="2.10.25.10">
    <property type="entry name" value="Laminin"/>
    <property type="match status" value="7"/>
</dbReference>
<dbReference type="Gene3D" id="1.20.1070.10">
    <property type="entry name" value="Rhodopsin 7-helix transmembrane proteins"/>
    <property type="match status" value="1"/>
</dbReference>
<dbReference type="InterPro" id="IPR001881">
    <property type="entry name" value="EGF-like_Ca-bd_dom"/>
</dbReference>
<dbReference type="InterPro" id="IPR000742">
    <property type="entry name" value="EGF-like_dom"/>
</dbReference>
<dbReference type="InterPro" id="IPR000152">
    <property type="entry name" value="EGF-type_Asp/Asn_hydroxyl_site"/>
</dbReference>
<dbReference type="InterPro" id="IPR018097">
    <property type="entry name" value="EGF_Ca-bd_CS"/>
</dbReference>
<dbReference type="InterPro" id="IPR057244">
    <property type="entry name" value="GAIN_B"/>
</dbReference>
<dbReference type="InterPro" id="IPR032471">
    <property type="entry name" value="GAIN_dom_N"/>
</dbReference>
<dbReference type="InterPro" id="IPR046338">
    <property type="entry name" value="GAIN_dom_sf"/>
</dbReference>
<dbReference type="InterPro" id="IPR017981">
    <property type="entry name" value="GPCR_2-like_7TM"/>
</dbReference>
<dbReference type="InterPro" id="IPR001740">
    <property type="entry name" value="GPCR_2_EMR1-like_rcpt"/>
</dbReference>
<dbReference type="InterPro" id="IPR000832">
    <property type="entry name" value="GPCR_2_secretin-like"/>
</dbReference>
<dbReference type="InterPro" id="IPR017983">
    <property type="entry name" value="GPCR_2_secretin-like_CS"/>
</dbReference>
<dbReference type="InterPro" id="IPR000203">
    <property type="entry name" value="GPS"/>
</dbReference>
<dbReference type="InterPro" id="IPR009030">
    <property type="entry name" value="Growth_fac_rcpt_cys_sf"/>
</dbReference>
<dbReference type="InterPro" id="IPR049883">
    <property type="entry name" value="NOTCH1_EGF-like"/>
</dbReference>
<dbReference type="PANTHER" id="PTHR12011:SF449">
    <property type="entry name" value="ADHESION G PROTEIN-COUPLED RECEPTOR E1"/>
    <property type="match status" value="1"/>
</dbReference>
<dbReference type="PANTHER" id="PTHR12011">
    <property type="entry name" value="ADHESION G-PROTEIN COUPLED RECEPTOR"/>
    <property type="match status" value="1"/>
</dbReference>
<dbReference type="Pfam" id="PF00002">
    <property type="entry name" value="7tm_2"/>
    <property type="match status" value="1"/>
</dbReference>
<dbReference type="Pfam" id="PF07645">
    <property type="entry name" value="EGF_CA"/>
    <property type="match status" value="7"/>
</dbReference>
<dbReference type="Pfam" id="PF16489">
    <property type="entry name" value="GAIN"/>
    <property type="match status" value="1"/>
</dbReference>
<dbReference type="Pfam" id="PF01825">
    <property type="entry name" value="GPS"/>
    <property type="match status" value="1"/>
</dbReference>
<dbReference type="PRINTS" id="PR01128">
    <property type="entry name" value="EMR1HORMONER"/>
</dbReference>
<dbReference type="PRINTS" id="PR00249">
    <property type="entry name" value="GPCRSECRETIN"/>
</dbReference>
<dbReference type="SMART" id="SM00181">
    <property type="entry name" value="EGF"/>
    <property type="match status" value="7"/>
</dbReference>
<dbReference type="SMART" id="SM00179">
    <property type="entry name" value="EGF_CA"/>
    <property type="match status" value="7"/>
</dbReference>
<dbReference type="SMART" id="SM00303">
    <property type="entry name" value="GPS"/>
    <property type="match status" value="1"/>
</dbReference>
<dbReference type="SUPFAM" id="SSF81321">
    <property type="entry name" value="Family A G protein-coupled receptor-like"/>
    <property type="match status" value="1"/>
</dbReference>
<dbReference type="SUPFAM" id="SSF57184">
    <property type="entry name" value="Growth factor receptor domain"/>
    <property type="match status" value="3"/>
</dbReference>
<dbReference type="PROSITE" id="PS00010">
    <property type="entry name" value="ASX_HYDROXYL"/>
    <property type="match status" value="6"/>
</dbReference>
<dbReference type="PROSITE" id="PS01186">
    <property type="entry name" value="EGF_2"/>
    <property type="match status" value="1"/>
</dbReference>
<dbReference type="PROSITE" id="PS50026">
    <property type="entry name" value="EGF_3"/>
    <property type="match status" value="7"/>
</dbReference>
<dbReference type="PROSITE" id="PS01187">
    <property type="entry name" value="EGF_CA"/>
    <property type="match status" value="5"/>
</dbReference>
<dbReference type="PROSITE" id="PS00650">
    <property type="entry name" value="G_PROTEIN_RECEP_F2_2"/>
    <property type="match status" value="1"/>
</dbReference>
<dbReference type="PROSITE" id="PS50261">
    <property type="entry name" value="G_PROTEIN_RECEP_F2_4"/>
    <property type="match status" value="1"/>
</dbReference>
<dbReference type="PROSITE" id="PS50221">
    <property type="entry name" value="GAIN_B"/>
    <property type="match status" value="1"/>
</dbReference>
<keyword id="KW-1064">Adaptive immunity</keyword>
<keyword id="KW-0106">Calcium</keyword>
<keyword id="KW-1003">Cell membrane</keyword>
<keyword id="KW-1015">Disulfide bond</keyword>
<keyword id="KW-0245">EGF-like domain</keyword>
<keyword id="KW-0297">G-protein coupled receptor</keyword>
<keyword id="KW-0325">Glycoprotein</keyword>
<keyword id="KW-0391">Immunity</keyword>
<keyword id="KW-0472">Membrane</keyword>
<keyword id="KW-0675">Receptor</keyword>
<keyword id="KW-1185">Reference proteome</keyword>
<keyword id="KW-0677">Repeat</keyword>
<keyword id="KW-0732">Signal</keyword>
<keyword id="KW-0807">Transducer</keyword>
<keyword id="KW-0812">Transmembrane</keyword>
<keyword id="KW-1133">Transmembrane helix</keyword>
<comment type="function">
    <text evidence="2">Orphan receptor involved in cell adhesion and probably in cell-cell interactions involved specifically cells of the immune system. May play a role in regulatory T-cells (Treg) development.</text>
</comment>
<comment type="subcellular location">
    <subcellularLocation>
        <location evidence="1">Cell membrane</location>
        <topology evidence="3">Multi-pass membrane protein</topology>
    </subcellularLocation>
</comment>
<comment type="miscellaneous">
    <text evidence="1">Most adhesion GPCRs proteins undergo autoproteolysis at the GPS region of the GAIN-B domain. ADGRE1 is predicted non-cleavable because of the lack of a consensus catalytic triad sequence within GPS region.</text>
</comment>
<comment type="similarity">
    <text evidence="6">Belongs to the G-protein coupled receptor 2 family. Adhesion G-protein coupled receptor (ADGR) subfamily.</text>
</comment>
<organism>
    <name type="scientific">Rattus norvegicus</name>
    <name type="common">Rat</name>
    <dbReference type="NCBI Taxonomy" id="10116"/>
    <lineage>
        <taxon>Eukaryota</taxon>
        <taxon>Metazoa</taxon>
        <taxon>Chordata</taxon>
        <taxon>Craniata</taxon>
        <taxon>Vertebrata</taxon>
        <taxon>Euteleostomi</taxon>
        <taxon>Mammalia</taxon>
        <taxon>Eutheria</taxon>
        <taxon>Euarchontoglires</taxon>
        <taxon>Glires</taxon>
        <taxon>Rodentia</taxon>
        <taxon>Myomorpha</taxon>
        <taxon>Muroidea</taxon>
        <taxon>Muridae</taxon>
        <taxon>Murinae</taxon>
        <taxon>Rattus</taxon>
    </lineage>
</organism>
<evidence type="ECO:0000250" key="1">
    <source>
        <dbReference type="UniProtKB" id="Q14246"/>
    </source>
</evidence>
<evidence type="ECO:0000250" key="2">
    <source>
        <dbReference type="UniProtKB" id="Q61549"/>
    </source>
</evidence>
<evidence type="ECO:0000255" key="3"/>
<evidence type="ECO:0000255" key="4">
    <source>
        <dbReference type="PROSITE-ProRule" id="PRU00076"/>
    </source>
</evidence>
<evidence type="ECO:0000255" key="5">
    <source>
        <dbReference type="PROSITE-ProRule" id="PRU00098"/>
    </source>
</evidence>
<evidence type="ECO:0000305" key="6"/>